<gene>
    <name evidence="1" type="primary">nanM</name>
    <name type="ordered locus">SNSL254_A1225</name>
</gene>
<keyword id="KW-0119">Carbohydrate metabolism</keyword>
<keyword id="KW-0413">Isomerase</keyword>
<keyword id="KW-0880">Kelch repeat</keyword>
<keyword id="KW-0574">Periplasm</keyword>
<keyword id="KW-0677">Repeat</keyword>
<keyword id="KW-0732">Signal</keyword>
<protein>
    <recommendedName>
        <fullName evidence="1">N-acetylneuraminate epimerase</fullName>
        <ecNumber evidence="1">5.1.3.24</ecNumber>
    </recommendedName>
    <alternativeName>
        <fullName evidence="1">N-acetylneuraminate mutarotase</fullName>
        <shortName evidence="1">Neu5Ac mutarotase</shortName>
    </alternativeName>
    <alternativeName>
        <fullName evidence="1">Sialic acid epimerase</fullName>
    </alternativeName>
</protein>
<sequence>MGMQMKNFKKMMTLMALCLSVAITTSGYATTLPDIPEPLKNGTGAIDNNGVIYVGLGTAGTSWYKIDLKKQHKDWERIKSFPGGAREQSVSVFLNDELYVFGGVGKKNSESPLQVYSDVYKYSPVKNTWQKVDTISPVGLTGHTGVKLNETMVLITGGVNEHIFDKYFIDIAAAAADESEKNKVIYNYFNKPAKDYFFNKIVFIYNAKENTWKNAGELPDAGTAGSSSVMENNFLMLINGELKPGLRTDVIYRAMWDNDKLTWLKNSQLPPSPGEQQQEGLAGAFSGYSHGVLLVGGGANFPGAKQNYTNGKFYSHEGINKKWRDEVYGLVNGHWQYMGKMKQPLGYGVSVSYGDEVFLIGGENAKGKPVSSVTSFTMRDGNLLIK</sequence>
<comment type="function">
    <text evidence="1">Converts alpha-N-acetylneuranimic acid (Neu5Ac) to the beta-anomer, accelerating the equilibrium between the alpha- and beta-anomers. Probably facilitates sialidase-negative bacteria to compete successfully for limited amounts of extracellular Neu5Ac, which is likely taken up in the beta-anomer. In addition, the rapid removal of sialic acid from solution might be advantageous to the bacterium to damp down host responses.</text>
</comment>
<comment type="catalytic activity">
    <reaction evidence="1">
        <text>N-acetyl-alpha-neuraminate = N-acetyl-beta-neuraminate</text>
        <dbReference type="Rhea" id="RHEA:25233"/>
        <dbReference type="ChEBI" id="CHEBI:58705"/>
        <dbReference type="ChEBI" id="CHEBI:58770"/>
        <dbReference type="EC" id="5.1.3.24"/>
    </reaction>
</comment>
<comment type="subunit">
    <text evidence="1">Homodimer.</text>
</comment>
<comment type="subcellular location">
    <subcellularLocation>
        <location evidence="1">Periplasm</location>
    </subcellularLocation>
</comment>
<comment type="similarity">
    <text evidence="1">Belongs to the NanM family.</text>
</comment>
<evidence type="ECO:0000255" key="1">
    <source>
        <dbReference type="HAMAP-Rule" id="MF_01195"/>
    </source>
</evidence>
<feature type="signal peptide" evidence="1">
    <location>
        <begin position="1"/>
        <end position="29"/>
    </location>
</feature>
<feature type="chain" id="PRO_1000138425" description="N-acetylneuraminate epimerase">
    <location>
        <begin position="30"/>
        <end position="386"/>
    </location>
</feature>
<feature type="repeat" description="Kelch 1">
    <location>
        <begin position="51"/>
        <end position="95"/>
    </location>
</feature>
<feature type="repeat" description="Kelch 2">
    <location>
        <begin position="97"/>
        <end position="149"/>
    </location>
</feature>
<feature type="repeat" description="Kelch 3">
    <location>
        <begin position="151"/>
        <end position="186"/>
    </location>
</feature>
<feature type="repeat" description="Kelch 4">
    <location>
        <begin position="187"/>
        <end position="232"/>
    </location>
</feature>
<feature type="repeat" description="Kelch 5">
    <location>
        <begin position="235"/>
        <end position="284"/>
    </location>
</feature>
<feature type="repeat" description="Kelch 6">
    <location>
        <begin position="306"/>
        <end position="355"/>
    </location>
</feature>
<feature type="repeat" description="Kelch 7">
    <location>
        <begin position="357"/>
        <end position="386"/>
    </location>
</feature>
<feature type="active site" description="Proton acceptor" evidence="1">
    <location>
        <position position="241"/>
    </location>
</feature>
<accession>B4T2W1</accession>
<proteinExistence type="inferred from homology"/>
<dbReference type="EC" id="5.1.3.24" evidence="1"/>
<dbReference type="EMBL" id="CP001113">
    <property type="protein sequence ID" value="ACF64260.1"/>
    <property type="molecule type" value="Genomic_DNA"/>
</dbReference>
<dbReference type="RefSeq" id="WP_000525756.1">
    <property type="nucleotide sequence ID" value="NZ_CCMR01000003.1"/>
</dbReference>
<dbReference type="SMR" id="B4T2W1"/>
<dbReference type="KEGG" id="see:SNSL254_A1225"/>
<dbReference type="HOGENOM" id="CLU_061535_0_0_6"/>
<dbReference type="Proteomes" id="UP000008824">
    <property type="component" value="Chromosome"/>
</dbReference>
<dbReference type="GO" id="GO:0042597">
    <property type="term" value="C:periplasmic space"/>
    <property type="evidence" value="ECO:0007669"/>
    <property type="project" value="UniProtKB-SubCell"/>
</dbReference>
<dbReference type="GO" id="GO:0016857">
    <property type="term" value="F:racemase and epimerase activity, acting on carbohydrates and derivatives"/>
    <property type="evidence" value="ECO:0007669"/>
    <property type="project" value="UniProtKB-UniRule"/>
</dbReference>
<dbReference type="Gene3D" id="2.120.10.80">
    <property type="entry name" value="Kelch-type beta propeller"/>
    <property type="match status" value="2"/>
</dbReference>
<dbReference type="HAMAP" id="MF_01195">
    <property type="entry name" value="NanM"/>
    <property type="match status" value="1"/>
</dbReference>
<dbReference type="InterPro" id="IPR015915">
    <property type="entry name" value="Kelch-typ_b-propeller"/>
</dbReference>
<dbReference type="InterPro" id="IPR056734">
    <property type="entry name" value="NANM"/>
</dbReference>
<dbReference type="InterPro" id="IPR019936">
    <property type="entry name" value="NanM_proteobact"/>
</dbReference>
<dbReference type="NCBIfam" id="TIGR03547">
    <property type="entry name" value="muta_rot_YjhT"/>
    <property type="match status" value="1"/>
</dbReference>
<dbReference type="NCBIfam" id="NF010730">
    <property type="entry name" value="PRK14131.1"/>
    <property type="match status" value="1"/>
</dbReference>
<dbReference type="PANTHER" id="PTHR46093">
    <property type="entry name" value="ACYL-COA-BINDING DOMAIN-CONTAINING PROTEIN 5"/>
    <property type="match status" value="1"/>
</dbReference>
<dbReference type="PANTHER" id="PTHR46093:SF18">
    <property type="entry name" value="FIBRONECTIN TYPE-III DOMAIN-CONTAINING PROTEIN"/>
    <property type="match status" value="1"/>
</dbReference>
<dbReference type="Pfam" id="PF24996">
    <property type="entry name" value="NANM"/>
    <property type="match status" value="1"/>
</dbReference>
<dbReference type="SUPFAM" id="SSF117281">
    <property type="entry name" value="Kelch motif"/>
    <property type="match status" value="1"/>
</dbReference>
<reference key="1">
    <citation type="journal article" date="2011" name="J. Bacteriol.">
        <title>Comparative genomics of 28 Salmonella enterica isolates: evidence for CRISPR-mediated adaptive sublineage evolution.</title>
        <authorList>
            <person name="Fricke W.F."/>
            <person name="Mammel M.K."/>
            <person name="McDermott P.F."/>
            <person name="Tartera C."/>
            <person name="White D.G."/>
            <person name="Leclerc J.E."/>
            <person name="Ravel J."/>
            <person name="Cebula T.A."/>
        </authorList>
    </citation>
    <scope>NUCLEOTIDE SEQUENCE [LARGE SCALE GENOMIC DNA]</scope>
    <source>
        <strain>SL254</strain>
    </source>
</reference>
<organism>
    <name type="scientific">Salmonella newport (strain SL254)</name>
    <dbReference type="NCBI Taxonomy" id="423368"/>
    <lineage>
        <taxon>Bacteria</taxon>
        <taxon>Pseudomonadati</taxon>
        <taxon>Pseudomonadota</taxon>
        <taxon>Gammaproteobacteria</taxon>
        <taxon>Enterobacterales</taxon>
        <taxon>Enterobacteriaceae</taxon>
        <taxon>Salmonella</taxon>
    </lineage>
</organism>
<name>NANM_SALNS</name>